<accession>Q5HIF2</accession>
<gene>
    <name type="primary">ctsR</name>
    <name type="ordered locus">SACOL0567</name>
</gene>
<protein>
    <recommendedName>
        <fullName>Transcriptional regulator CtsR</fullName>
    </recommendedName>
</protein>
<reference key="1">
    <citation type="journal article" date="2005" name="J. Bacteriol.">
        <title>Insights on evolution of virulence and resistance from the complete genome analysis of an early methicillin-resistant Staphylococcus aureus strain and a biofilm-producing methicillin-resistant Staphylococcus epidermidis strain.</title>
        <authorList>
            <person name="Gill S.R."/>
            <person name="Fouts D.E."/>
            <person name="Archer G.L."/>
            <person name="Mongodin E.F."/>
            <person name="DeBoy R.T."/>
            <person name="Ravel J."/>
            <person name="Paulsen I.T."/>
            <person name="Kolonay J.F."/>
            <person name="Brinkac L.M."/>
            <person name="Beanan M.J."/>
            <person name="Dodson R.J."/>
            <person name="Daugherty S.C."/>
            <person name="Madupu R."/>
            <person name="Angiuoli S.V."/>
            <person name="Durkin A.S."/>
            <person name="Haft D.H."/>
            <person name="Vamathevan J.J."/>
            <person name="Khouri H."/>
            <person name="Utterback T.R."/>
            <person name="Lee C."/>
            <person name="Dimitrov G."/>
            <person name="Jiang L."/>
            <person name="Qin H."/>
            <person name="Weidman J."/>
            <person name="Tran K."/>
            <person name="Kang K.H."/>
            <person name="Hance I.R."/>
            <person name="Nelson K.E."/>
            <person name="Fraser C.M."/>
        </authorList>
    </citation>
    <scope>NUCLEOTIDE SEQUENCE [LARGE SCALE GENOMIC DNA]</scope>
    <source>
        <strain>COL</strain>
    </source>
</reference>
<name>CTSR_STAAC</name>
<keyword id="KW-0238">DNA-binding</keyword>
<keyword id="KW-0678">Repressor</keyword>
<keyword id="KW-0346">Stress response</keyword>
<keyword id="KW-0804">Transcription</keyword>
<keyword id="KW-0805">Transcription regulation</keyword>
<evidence type="ECO:0000250" key="1"/>
<evidence type="ECO:0000305" key="2"/>
<organism>
    <name type="scientific">Staphylococcus aureus (strain COL)</name>
    <dbReference type="NCBI Taxonomy" id="93062"/>
    <lineage>
        <taxon>Bacteria</taxon>
        <taxon>Bacillati</taxon>
        <taxon>Bacillota</taxon>
        <taxon>Bacilli</taxon>
        <taxon>Bacillales</taxon>
        <taxon>Staphylococcaceae</taxon>
        <taxon>Staphylococcus</taxon>
    </lineage>
</organism>
<comment type="function">
    <text evidence="1">Negative regulator of clpC, clpB and clpP transcription by binding directly and specifically to their promoter region.</text>
</comment>
<comment type="similarity">
    <text evidence="2">Belongs to the CtsR family.</text>
</comment>
<feature type="chain" id="PRO_0000274131" description="Transcriptional regulator CtsR">
    <location>
        <begin position="1"/>
        <end position="153"/>
    </location>
</feature>
<dbReference type="EMBL" id="CP000046">
    <property type="protein sequence ID" value="AAW37679.1"/>
    <property type="molecule type" value="Genomic_DNA"/>
</dbReference>
<dbReference type="RefSeq" id="WP_000551762.1">
    <property type="nucleotide sequence ID" value="NZ_JBGOFO010000009.1"/>
</dbReference>
<dbReference type="SMR" id="Q5HIF2"/>
<dbReference type="KEGG" id="sac:SACOL0567"/>
<dbReference type="HOGENOM" id="CLU_118139_0_0_9"/>
<dbReference type="Proteomes" id="UP000000530">
    <property type="component" value="Chromosome"/>
</dbReference>
<dbReference type="GO" id="GO:0003677">
    <property type="term" value="F:DNA binding"/>
    <property type="evidence" value="ECO:0007669"/>
    <property type="project" value="UniProtKB-KW"/>
</dbReference>
<dbReference type="GO" id="GO:0006355">
    <property type="term" value="P:regulation of DNA-templated transcription"/>
    <property type="evidence" value="ECO:0007669"/>
    <property type="project" value="InterPro"/>
</dbReference>
<dbReference type="FunFam" id="1.10.1200.150:FF:000002">
    <property type="entry name" value="Transcriptional regulator CtsR"/>
    <property type="match status" value="1"/>
</dbReference>
<dbReference type="FunFam" id="3.30.56.130:FF:000001">
    <property type="entry name" value="Transcriptional regulator CtsR"/>
    <property type="match status" value="1"/>
</dbReference>
<dbReference type="Gene3D" id="1.10.1200.150">
    <property type="entry name" value="Transcriptional regulator CtsR, C-terminal domain"/>
    <property type="match status" value="1"/>
</dbReference>
<dbReference type="Gene3D" id="3.30.56.130">
    <property type="entry name" value="Transcriptional regulator CtsR, winged HTH domain"/>
    <property type="match status" value="1"/>
</dbReference>
<dbReference type="InterPro" id="IPR008463">
    <property type="entry name" value="CtsR"/>
</dbReference>
<dbReference type="InterPro" id="IPR041473">
    <property type="entry name" value="CtsR_C"/>
</dbReference>
<dbReference type="InterPro" id="IPR041908">
    <property type="entry name" value="CtsR_C_sf"/>
</dbReference>
<dbReference type="InterPro" id="IPR040465">
    <property type="entry name" value="CtsR_N"/>
</dbReference>
<dbReference type="InterPro" id="IPR041902">
    <property type="entry name" value="CtsR_N_sf"/>
</dbReference>
<dbReference type="Pfam" id="PF05848">
    <property type="entry name" value="CtsR"/>
    <property type="match status" value="1"/>
</dbReference>
<dbReference type="Pfam" id="PF17727">
    <property type="entry name" value="CtsR_C"/>
    <property type="match status" value="1"/>
</dbReference>
<dbReference type="PIRSF" id="PIRSF010607">
    <property type="entry name" value="Txn_repr_CtsR"/>
    <property type="match status" value="1"/>
</dbReference>
<proteinExistence type="inferred from homology"/>
<sequence>MHNMSDIIEQYIKRLFEESNEDVVEIQRANIAQRFDCVPSQLNYVIKTRFTNEHGYEIESKRGGGGYIRITKIENKDATGYINHLLQLIGPSISQQQAYYIIDGLLDKMLINEREAKMIQAVIDRETLSMDMVSRDIIRANILKRLLPVINYY</sequence>